<accession>P34654</accession>
<keyword id="KW-1185">Reference proteome</keyword>
<sequence length="62" mass="6574">MSSTAEEMAAAFEQTGGPDLTTGSGKRTKSDRVEHKHASQPGGDTRKVVQTASNGEAKRKEK</sequence>
<evidence type="ECO:0000256" key="1">
    <source>
        <dbReference type="SAM" id="MobiDB-lite"/>
    </source>
</evidence>
<feature type="chain" id="PRO_0000065525" description="Uncharacterized protein ZK632.9">
    <location>
        <begin position="1"/>
        <end position="62"/>
    </location>
</feature>
<feature type="region of interest" description="Disordered" evidence="1">
    <location>
        <begin position="1"/>
        <end position="62"/>
    </location>
</feature>
<feature type="compositionally biased region" description="Basic and acidic residues" evidence="1">
    <location>
        <begin position="28"/>
        <end position="37"/>
    </location>
</feature>
<proteinExistence type="predicted"/>
<dbReference type="EMBL" id="Z22181">
    <property type="protein sequence ID" value="CAA80189.2"/>
    <property type="molecule type" value="Genomic_DNA"/>
</dbReference>
<dbReference type="PIR" id="A88567">
    <property type="entry name" value="A88567"/>
</dbReference>
<dbReference type="PIR" id="S40941">
    <property type="entry name" value="S40941"/>
</dbReference>
<dbReference type="RefSeq" id="NP_499180.1">
    <property type="nucleotide sequence ID" value="NM_066779.7"/>
</dbReference>
<dbReference type="BioGRID" id="41588">
    <property type="interactions" value="1"/>
</dbReference>
<dbReference type="FunCoup" id="P34654">
    <property type="interactions" value="36"/>
</dbReference>
<dbReference type="STRING" id="6239.ZK632.9.1"/>
<dbReference type="PaxDb" id="6239-ZK632.9.1"/>
<dbReference type="PeptideAtlas" id="P34654"/>
<dbReference type="EnsemblMetazoa" id="ZK632.9.1">
    <property type="protein sequence ID" value="ZK632.9.1"/>
    <property type="gene ID" value="WBGene00014016"/>
</dbReference>
<dbReference type="GeneID" id="176394"/>
<dbReference type="KEGG" id="cel:CELE_ZK632.9"/>
<dbReference type="UCSC" id="ZK632.9">
    <property type="organism name" value="c. elegans"/>
</dbReference>
<dbReference type="AGR" id="WB:WBGene00014016"/>
<dbReference type="CTD" id="176394"/>
<dbReference type="WormBase" id="ZK632.9">
    <property type="protein sequence ID" value="CE28193"/>
    <property type="gene ID" value="WBGene00014016"/>
</dbReference>
<dbReference type="eggNOG" id="KOG4319">
    <property type="taxonomic scope" value="Eukaryota"/>
</dbReference>
<dbReference type="HOGENOM" id="CLU_202761_0_0_1"/>
<dbReference type="InParanoid" id="P34654"/>
<dbReference type="OMA" id="KHAHPEG"/>
<dbReference type="OrthoDB" id="5839479at2759"/>
<dbReference type="PRO" id="PR:P34654"/>
<dbReference type="Proteomes" id="UP000001940">
    <property type="component" value="Chromosome III"/>
</dbReference>
<dbReference type="Bgee" id="WBGene00014016">
    <property type="expression patterns" value="Expressed in adult organism and 4 other cell types or tissues"/>
</dbReference>
<dbReference type="InterPro" id="IPR018792">
    <property type="entry name" value="NUPR1-like"/>
</dbReference>
<dbReference type="Pfam" id="PF10195">
    <property type="entry name" value="Phospho_p8"/>
    <property type="match status" value="1"/>
</dbReference>
<gene>
    <name type="ORF">ZK632.9</name>
</gene>
<organism>
    <name type="scientific">Caenorhabditis elegans</name>
    <dbReference type="NCBI Taxonomy" id="6239"/>
    <lineage>
        <taxon>Eukaryota</taxon>
        <taxon>Metazoa</taxon>
        <taxon>Ecdysozoa</taxon>
        <taxon>Nematoda</taxon>
        <taxon>Chromadorea</taxon>
        <taxon>Rhabditida</taxon>
        <taxon>Rhabditina</taxon>
        <taxon>Rhabditomorpha</taxon>
        <taxon>Rhabditoidea</taxon>
        <taxon>Rhabditidae</taxon>
        <taxon>Peloderinae</taxon>
        <taxon>Caenorhabditis</taxon>
    </lineage>
</organism>
<protein>
    <recommendedName>
        <fullName>Uncharacterized protein ZK632.9</fullName>
    </recommendedName>
</protein>
<name>YOT9_CAEEL</name>
<reference key="1">
    <citation type="journal article" date="1994" name="Nature">
        <title>2.2 Mb of contiguous nucleotide sequence from chromosome III of C. elegans.</title>
        <authorList>
            <person name="Wilson R."/>
            <person name="Ainscough R."/>
            <person name="Anderson K."/>
            <person name="Baynes C."/>
            <person name="Berks M."/>
            <person name="Bonfield J."/>
            <person name="Burton J."/>
            <person name="Connell M."/>
            <person name="Copsey T."/>
            <person name="Cooper J."/>
            <person name="Coulson A."/>
            <person name="Craxton M."/>
            <person name="Dear S."/>
            <person name="Du Z."/>
            <person name="Durbin R."/>
            <person name="Favello A."/>
            <person name="Fraser A."/>
            <person name="Fulton L."/>
            <person name="Gardner A."/>
            <person name="Green P."/>
            <person name="Hawkins T."/>
            <person name="Hillier L."/>
            <person name="Jier M."/>
            <person name="Johnston L."/>
            <person name="Jones M."/>
            <person name="Kershaw J."/>
            <person name="Kirsten J."/>
            <person name="Laisster N."/>
            <person name="Latreille P."/>
            <person name="Lightning J."/>
            <person name="Lloyd C."/>
            <person name="Mortimore B."/>
            <person name="O'Callaghan M."/>
            <person name="Parsons J."/>
            <person name="Percy C."/>
            <person name="Rifken L."/>
            <person name="Roopra A."/>
            <person name="Saunders D."/>
            <person name="Shownkeen R."/>
            <person name="Sims M."/>
            <person name="Smaldon N."/>
            <person name="Smith A."/>
            <person name="Smith M."/>
            <person name="Sonnhammer E."/>
            <person name="Staden R."/>
            <person name="Sulston J."/>
            <person name="Thierry-Mieg J."/>
            <person name="Thomas K."/>
            <person name="Vaudin M."/>
            <person name="Vaughan K."/>
            <person name="Waterston R."/>
            <person name="Watson A."/>
            <person name="Weinstock L."/>
            <person name="Wilkinson-Sproat J."/>
            <person name="Wohldman P."/>
        </authorList>
    </citation>
    <scope>NUCLEOTIDE SEQUENCE [LARGE SCALE GENOMIC DNA]</scope>
    <source>
        <strain>Bristol N2</strain>
    </source>
</reference>
<reference key="2">
    <citation type="journal article" date="1998" name="Science">
        <title>Genome sequence of the nematode C. elegans: a platform for investigating biology.</title>
        <authorList>
            <consortium name="The C. elegans sequencing consortium"/>
        </authorList>
    </citation>
    <scope>NUCLEOTIDE SEQUENCE [LARGE SCALE GENOMIC DNA]</scope>
    <source>
        <strain>Bristol N2</strain>
    </source>
</reference>